<name>SYA_METPB</name>
<protein>
    <recommendedName>
        <fullName evidence="1">Alanine--tRNA ligase</fullName>
        <ecNumber evidence="1">6.1.1.7</ecNumber>
    </recommendedName>
    <alternativeName>
        <fullName evidence="1">Alanyl-tRNA synthetase</fullName>
        <shortName evidence="1">AlaRS</shortName>
    </alternativeName>
</protein>
<dbReference type="EC" id="6.1.1.7" evidence="1"/>
<dbReference type="EMBL" id="CP001029">
    <property type="protein sequence ID" value="ACB80783.1"/>
    <property type="molecule type" value="Genomic_DNA"/>
</dbReference>
<dbReference type="RefSeq" id="WP_012454505.1">
    <property type="nucleotide sequence ID" value="NC_010725.1"/>
</dbReference>
<dbReference type="SMR" id="B1ZC90"/>
<dbReference type="STRING" id="441620.Mpop_2626"/>
<dbReference type="KEGG" id="mpo:Mpop_2626"/>
<dbReference type="eggNOG" id="COG0013">
    <property type="taxonomic scope" value="Bacteria"/>
</dbReference>
<dbReference type="HOGENOM" id="CLU_004485_1_1_5"/>
<dbReference type="OrthoDB" id="9803884at2"/>
<dbReference type="Proteomes" id="UP000007136">
    <property type="component" value="Chromosome"/>
</dbReference>
<dbReference type="GO" id="GO:0005829">
    <property type="term" value="C:cytosol"/>
    <property type="evidence" value="ECO:0007669"/>
    <property type="project" value="TreeGrafter"/>
</dbReference>
<dbReference type="GO" id="GO:0004813">
    <property type="term" value="F:alanine-tRNA ligase activity"/>
    <property type="evidence" value="ECO:0007669"/>
    <property type="project" value="UniProtKB-UniRule"/>
</dbReference>
<dbReference type="GO" id="GO:0002161">
    <property type="term" value="F:aminoacyl-tRNA deacylase activity"/>
    <property type="evidence" value="ECO:0007669"/>
    <property type="project" value="TreeGrafter"/>
</dbReference>
<dbReference type="GO" id="GO:0005524">
    <property type="term" value="F:ATP binding"/>
    <property type="evidence" value="ECO:0007669"/>
    <property type="project" value="UniProtKB-UniRule"/>
</dbReference>
<dbReference type="GO" id="GO:0000049">
    <property type="term" value="F:tRNA binding"/>
    <property type="evidence" value="ECO:0007669"/>
    <property type="project" value="UniProtKB-KW"/>
</dbReference>
<dbReference type="GO" id="GO:0008270">
    <property type="term" value="F:zinc ion binding"/>
    <property type="evidence" value="ECO:0007669"/>
    <property type="project" value="UniProtKB-UniRule"/>
</dbReference>
<dbReference type="GO" id="GO:0006419">
    <property type="term" value="P:alanyl-tRNA aminoacylation"/>
    <property type="evidence" value="ECO:0007669"/>
    <property type="project" value="UniProtKB-UniRule"/>
</dbReference>
<dbReference type="GO" id="GO:0045892">
    <property type="term" value="P:negative regulation of DNA-templated transcription"/>
    <property type="evidence" value="ECO:0007669"/>
    <property type="project" value="TreeGrafter"/>
</dbReference>
<dbReference type="CDD" id="cd00673">
    <property type="entry name" value="AlaRS_core"/>
    <property type="match status" value="1"/>
</dbReference>
<dbReference type="FunFam" id="2.40.30.130:FF:000001">
    <property type="entry name" value="Alanine--tRNA ligase"/>
    <property type="match status" value="1"/>
</dbReference>
<dbReference type="FunFam" id="3.10.310.40:FF:000001">
    <property type="entry name" value="Alanine--tRNA ligase"/>
    <property type="match status" value="1"/>
</dbReference>
<dbReference type="FunFam" id="3.30.54.20:FF:000001">
    <property type="entry name" value="Alanine--tRNA ligase"/>
    <property type="match status" value="1"/>
</dbReference>
<dbReference type="FunFam" id="3.30.930.10:FF:000004">
    <property type="entry name" value="Alanine--tRNA ligase"/>
    <property type="match status" value="1"/>
</dbReference>
<dbReference type="FunFam" id="3.30.980.10:FF:000004">
    <property type="entry name" value="Alanine--tRNA ligase, cytoplasmic"/>
    <property type="match status" value="1"/>
</dbReference>
<dbReference type="Gene3D" id="2.40.30.130">
    <property type="match status" value="1"/>
</dbReference>
<dbReference type="Gene3D" id="3.10.310.40">
    <property type="match status" value="1"/>
</dbReference>
<dbReference type="Gene3D" id="3.30.54.20">
    <property type="match status" value="1"/>
</dbReference>
<dbReference type="Gene3D" id="6.10.250.550">
    <property type="match status" value="1"/>
</dbReference>
<dbReference type="Gene3D" id="3.30.930.10">
    <property type="entry name" value="Bira Bifunctional Protein, Domain 2"/>
    <property type="match status" value="1"/>
</dbReference>
<dbReference type="Gene3D" id="3.30.980.10">
    <property type="entry name" value="Threonyl-trna Synthetase, Chain A, domain 2"/>
    <property type="match status" value="1"/>
</dbReference>
<dbReference type="HAMAP" id="MF_00036_B">
    <property type="entry name" value="Ala_tRNA_synth_B"/>
    <property type="match status" value="1"/>
</dbReference>
<dbReference type="InterPro" id="IPR045864">
    <property type="entry name" value="aa-tRNA-synth_II/BPL/LPL"/>
</dbReference>
<dbReference type="InterPro" id="IPR002318">
    <property type="entry name" value="Ala-tRNA-lgiase_IIc"/>
</dbReference>
<dbReference type="InterPro" id="IPR018162">
    <property type="entry name" value="Ala-tRNA-ligase_IIc_anticod-bd"/>
</dbReference>
<dbReference type="InterPro" id="IPR018165">
    <property type="entry name" value="Ala-tRNA-synth_IIc_core"/>
</dbReference>
<dbReference type="InterPro" id="IPR018164">
    <property type="entry name" value="Ala-tRNA-synth_IIc_N"/>
</dbReference>
<dbReference type="InterPro" id="IPR050058">
    <property type="entry name" value="Ala-tRNA_ligase"/>
</dbReference>
<dbReference type="InterPro" id="IPR023033">
    <property type="entry name" value="Ala_tRNA_ligase_euk/bac"/>
</dbReference>
<dbReference type="InterPro" id="IPR003156">
    <property type="entry name" value="DHHA1_dom"/>
</dbReference>
<dbReference type="InterPro" id="IPR018163">
    <property type="entry name" value="Thr/Ala-tRNA-synth_IIc_edit"/>
</dbReference>
<dbReference type="InterPro" id="IPR009000">
    <property type="entry name" value="Transl_B-barrel_sf"/>
</dbReference>
<dbReference type="InterPro" id="IPR012947">
    <property type="entry name" value="tRNA_SAD"/>
</dbReference>
<dbReference type="NCBIfam" id="TIGR00344">
    <property type="entry name" value="alaS"/>
    <property type="match status" value="1"/>
</dbReference>
<dbReference type="PANTHER" id="PTHR11777:SF9">
    <property type="entry name" value="ALANINE--TRNA LIGASE, CYTOPLASMIC"/>
    <property type="match status" value="1"/>
</dbReference>
<dbReference type="PANTHER" id="PTHR11777">
    <property type="entry name" value="ALANYL-TRNA SYNTHETASE"/>
    <property type="match status" value="1"/>
</dbReference>
<dbReference type="Pfam" id="PF02272">
    <property type="entry name" value="DHHA1"/>
    <property type="match status" value="1"/>
</dbReference>
<dbReference type="Pfam" id="PF01411">
    <property type="entry name" value="tRNA-synt_2c"/>
    <property type="match status" value="1"/>
</dbReference>
<dbReference type="Pfam" id="PF07973">
    <property type="entry name" value="tRNA_SAD"/>
    <property type="match status" value="1"/>
</dbReference>
<dbReference type="PRINTS" id="PR00980">
    <property type="entry name" value="TRNASYNTHALA"/>
</dbReference>
<dbReference type="SMART" id="SM00863">
    <property type="entry name" value="tRNA_SAD"/>
    <property type="match status" value="1"/>
</dbReference>
<dbReference type="SUPFAM" id="SSF55681">
    <property type="entry name" value="Class II aaRS and biotin synthetases"/>
    <property type="match status" value="1"/>
</dbReference>
<dbReference type="SUPFAM" id="SSF101353">
    <property type="entry name" value="Putative anticodon-binding domain of alanyl-tRNA synthetase (AlaRS)"/>
    <property type="match status" value="1"/>
</dbReference>
<dbReference type="SUPFAM" id="SSF55186">
    <property type="entry name" value="ThrRS/AlaRS common domain"/>
    <property type="match status" value="1"/>
</dbReference>
<dbReference type="SUPFAM" id="SSF50447">
    <property type="entry name" value="Translation proteins"/>
    <property type="match status" value="1"/>
</dbReference>
<dbReference type="PROSITE" id="PS50860">
    <property type="entry name" value="AA_TRNA_LIGASE_II_ALA"/>
    <property type="match status" value="1"/>
</dbReference>
<reference key="1">
    <citation type="submission" date="2008-04" db="EMBL/GenBank/DDBJ databases">
        <title>Complete sequence of chromosome of Methylobacterium populi BJ001.</title>
        <authorList>
            <consortium name="US DOE Joint Genome Institute"/>
            <person name="Copeland A."/>
            <person name="Lucas S."/>
            <person name="Lapidus A."/>
            <person name="Glavina del Rio T."/>
            <person name="Dalin E."/>
            <person name="Tice H."/>
            <person name="Bruce D."/>
            <person name="Goodwin L."/>
            <person name="Pitluck S."/>
            <person name="Chertkov O."/>
            <person name="Brettin T."/>
            <person name="Detter J.C."/>
            <person name="Han C."/>
            <person name="Kuske C.R."/>
            <person name="Schmutz J."/>
            <person name="Larimer F."/>
            <person name="Land M."/>
            <person name="Hauser L."/>
            <person name="Kyrpides N."/>
            <person name="Mikhailova N."/>
            <person name="Marx C."/>
            <person name="Richardson P."/>
        </authorList>
    </citation>
    <scope>NUCLEOTIDE SEQUENCE [LARGE SCALE GENOMIC DNA]</scope>
    <source>
        <strain>ATCC BAA-705 / NCIMB 13946 / BJ001</strain>
    </source>
</reference>
<comment type="function">
    <text evidence="1">Catalyzes the attachment of alanine to tRNA(Ala) in a two-step reaction: alanine is first activated by ATP to form Ala-AMP and then transferred to the acceptor end of tRNA(Ala). Also edits incorrectly charged Ser-tRNA(Ala) and Gly-tRNA(Ala) via its editing domain.</text>
</comment>
<comment type="catalytic activity">
    <reaction evidence="1">
        <text>tRNA(Ala) + L-alanine + ATP = L-alanyl-tRNA(Ala) + AMP + diphosphate</text>
        <dbReference type="Rhea" id="RHEA:12540"/>
        <dbReference type="Rhea" id="RHEA-COMP:9657"/>
        <dbReference type="Rhea" id="RHEA-COMP:9923"/>
        <dbReference type="ChEBI" id="CHEBI:30616"/>
        <dbReference type="ChEBI" id="CHEBI:33019"/>
        <dbReference type="ChEBI" id="CHEBI:57972"/>
        <dbReference type="ChEBI" id="CHEBI:78442"/>
        <dbReference type="ChEBI" id="CHEBI:78497"/>
        <dbReference type="ChEBI" id="CHEBI:456215"/>
        <dbReference type="EC" id="6.1.1.7"/>
    </reaction>
</comment>
<comment type="cofactor">
    <cofactor evidence="1">
        <name>Zn(2+)</name>
        <dbReference type="ChEBI" id="CHEBI:29105"/>
    </cofactor>
    <text evidence="1">Binds 1 zinc ion per subunit.</text>
</comment>
<comment type="subcellular location">
    <subcellularLocation>
        <location evidence="1">Cytoplasm</location>
    </subcellularLocation>
</comment>
<comment type="domain">
    <text evidence="1">Consists of three domains; the N-terminal catalytic domain, the editing domain and the C-terminal C-Ala domain. The editing domain removes incorrectly charged amino acids, while the C-Ala domain, along with tRNA(Ala), serves as a bridge to cooperatively bring together the editing and aminoacylation centers thus stimulating deacylation of misacylated tRNAs.</text>
</comment>
<comment type="similarity">
    <text evidence="1">Belongs to the class-II aminoacyl-tRNA synthetase family.</text>
</comment>
<accession>B1ZC90</accession>
<sequence length="891" mass="95628">MSGVNEIRSTFLDYFRDAGHAVVPSSSLVPKNDPTLMFTNAGMVQFKNVFTGVEKRPYVKATSSQKCVRAGGKHNDLDNVGYTARHHTFFEMLGNFSFGDYFKADAIELAWTLITKEFGLTPERLLVTVYADDDEAAGLWKKIAGFGDDKIIRIGTSDNFWQMGDTGPCGPCSEIFIDQGPALAGGPPGSPDEDGDRFLEFWNLVFMQYEQVEPGVRNPLPRPSIDTGMGLERMAAILQGVHSNYDTDLFRALIDAVAHAVSRAPEPATRASYRVIADHLRSTSFLIADGVLPSNEGRGYVLRRIMRRAMRHLELLGARDPVMYRLVPTLVREMGRAFPELVRSEALISETLRLEEGRFRKTLERGLAILDAESRDLSAGQNLSGETAFTLYDTYGFPLDLTQDALKARGIGVDTQAFDAAMQRQKQAARAAWQGSGEAATETVWFGIKERTGATEFLGYETETAEAVVGALLREGGEVETLKAGDSGIVVVNQTPFYGESGGQVGDTGTISGPGLKARVTNTEKKLGDLFVHHVTVEEGTLSLGAAVELKVDHARRSAIRANHSATHLLHEALRQVLGDHVAQKGSLVAPERLRFDISHPKPIDEAELTRVEEIANAVLLQNAPVVTKLMAVDEAIESGARALFGEKYGDEVRVVSMGRPVDDEGWEVEGRLPNFSIELCGGTHVSQLGEIGQITVIGESAVGAGVRRIEAMTGTAARRHRATESRTLSQLAGLLKAPVADVPERLSTLIEERRRLEKELADARKKIAMGGASGGGDEAREVNGVRLMARVVEGVEMRDLKGLADEGKSRLGSGIVAIVGVSADGKAGLVVGVTEDLTGRYDAVGLVRAGAGHLGGKGGGGRRDMAQAGGPDGHGAEAALAAIAEALAAA</sequence>
<gene>
    <name evidence="1" type="primary">alaS</name>
    <name type="ordered locus">Mpop_2626</name>
</gene>
<organism>
    <name type="scientific">Methylorubrum populi (strain ATCC BAA-705 / NCIMB 13946 / BJ001)</name>
    <name type="common">Methylobacterium populi</name>
    <dbReference type="NCBI Taxonomy" id="441620"/>
    <lineage>
        <taxon>Bacteria</taxon>
        <taxon>Pseudomonadati</taxon>
        <taxon>Pseudomonadota</taxon>
        <taxon>Alphaproteobacteria</taxon>
        <taxon>Hyphomicrobiales</taxon>
        <taxon>Methylobacteriaceae</taxon>
        <taxon>Methylorubrum</taxon>
    </lineage>
</organism>
<feature type="chain" id="PRO_0000347673" description="Alanine--tRNA ligase">
    <location>
        <begin position="1"/>
        <end position="891"/>
    </location>
</feature>
<feature type="binding site" evidence="1">
    <location>
        <position position="564"/>
    </location>
    <ligand>
        <name>Zn(2+)</name>
        <dbReference type="ChEBI" id="CHEBI:29105"/>
    </ligand>
</feature>
<feature type="binding site" evidence="1">
    <location>
        <position position="568"/>
    </location>
    <ligand>
        <name>Zn(2+)</name>
        <dbReference type="ChEBI" id="CHEBI:29105"/>
    </ligand>
</feature>
<feature type="binding site" evidence="1">
    <location>
        <position position="681"/>
    </location>
    <ligand>
        <name>Zn(2+)</name>
        <dbReference type="ChEBI" id="CHEBI:29105"/>
    </ligand>
</feature>
<feature type="binding site" evidence="1">
    <location>
        <position position="685"/>
    </location>
    <ligand>
        <name>Zn(2+)</name>
        <dbReference type="ChEBI" id="CHEBI:29105"/>
    </ligand>
</feature>
<keyword id="KW-0030">Aminoacyl-tRNA synthetase</keyword>
<keyword id="KW-0067">ATP-binding</keyword>
<keyword id="KW-0963">Cytoplasm</keyword>
<keyword id="KW-0436">Ligase</keyword>
<keyword id="KW-0479">Metal-binding</keyword>
<keyword id="KW-0547">Nucleotide-binding</keyword>
<keyword id="KW-0648">Protein biosynthesis</keyword>
<keyword id="KW-0694">RNA-binding</keyword>
<keyword id="KW-0820">tRNA-binding</keyword>
<keyword id="KW-0862">Zinc</keyword>
<proteinExistence type="inferred from homology"/>
<evidence type="ECO:0000255" key="1">
    <source>
        <dbReference type="HAMAP-Rule" id="MF_00036"/>
    </source>
</evidence>